<keyword id="KW-0131">Cell cycle</keyword>
<keyword id="KW-0132">Cell division</keyword>
<keyword id="KW-0963">Cytoplasm</keyword>
<keyword id="KW-0717">Septation</keyword>
<proteinExistence type="inferred from homology"/>
<reference key="1">
    <citation type="journal article" date="2007" name="PLoS Genet.">
        <title>Genome analysis of Minibacterium massiliensis highlights the convergent evolution of water-living bacteria.</title>
        <authorList>
            <person name="Audic S."/>
            <person name="Robert C."/>
            <person name="Campagna B."/>
            <person name="Parinello H."/>
            <person name="Claverie J.-M."/>
            <person name="Raoult D."/>
            <person name="Drancourt M."/>
        </authorList>
    </citation>
    <scope>NUCLEOTIDE SEQUENCE [LARGE SCALE GENOMIC DNA]</scope>
    <source>
        <strain>Marseille</strain>
    </source>
</reference>
<gene>
    <name evidence="1" type="primary">zapD</name>
    <name type="ordered locus">mma_3000</name>
</gene>
<accession>A6T2E3</accession>
<protein>
    <recommendedName>
        <fullName evidence="1">Cell division protein ZapD</fullName>
    </recommendedName>
    <alternativeName>
        <fullName evidence="1">Z ring-associated protein D</fullName>
    </alternativeName>
</protein>
<name>ZAPD_JANMA</name>
<comment type="function">
    <text evidence="1">Cell division factor that enhances FtsZ-ring assembly. Directly interacts with FtsZ and promotes bundling of FtsZ protofilaments, with a reduction in FtsZ GTPase activity.</text>
</comment>
<comment type="subunit">
    <text evidence="1">Interacts with FtsZ.</text>
</comment>
<comment type="subcellular location">
    <subcellularLocation>
        <location evidence="1">Cytoplasm</location>
    </subcellularLocation>
    <text evidence="1">Localizes to mid-cell in an FtsZ-dependent manner.</text>
</comment>
<comment type="similarity">
    <text evidence="1">Belongs to the ZapD family.</text>
</comment>
<sequence>MIVYEYPFNERIRTLLRLEDLYEKFAFFIGQDHPQHHHVALATMFEMLEVAGRADLKSDLLQELERQKQTLLGFKSNPNVEAEMLDAILFDLDRISAALIASQGKTGQHIRENEWLMSIRGRTIIPGGACEFDLPSYYAWQHDSAEQRLADIHKWFTPLAPLFDAIGMVLRLLRESGRPVKMIAQTGSYQQMLQGKAYQMLRLNIDEALGAIPEISANKYMLWIRFTSQDGDMKPKAFEGDVPFELSLCSF</sequence>
<dbReference type="EMBL" id="CP000269">
    <property type="protein sequence ID" value="ABR89656.1"/>
    <property type="molecule type" value="Genomic_DNA"/>
</dbReference>
<dbReference type="RefSeq" id="WP_012080849.1">
    <property type="nucleotide sequence ID" value="NC_009659.1"/>
</dbReference>
<dbReference type="SMR" id="A6T2E3"/>
<dbReference type="STRING" id="375286.mma_3000"/>
<dbReference type="KEGG" id="mms:mma_3000"/>
<dbReference type="eggNOG" id="COG4582">
    <property type="taxonomic scope" value="Bacteria"/>
</dbReference>
<dbReference type="HOGENOM" id="CLU_076303_0_1_4"/>
<dbReference type="OrthoDB" id="5294622at2"/>
<dbReference type="Proteomes" id="UP000006388">
    <property type="component" value="Chromosome"/>
</dbReference>
<dbReference type="GO" id="GO:0032153">
    <property type="term" value="C:cell division site"/>
    <property type="evidence" value="ECO:0007669"/>
    <property type="project" value="TreeGrafter"/>
</dbReference>
<dbReference type="GO" id="GO:0005737">
    <property type="term" value="C:cytoplasm"/>
    <property type="evidence" value="ECO:0007669"/>
    <property type="project" value="UniProtKB-SubCell"/>
</dbReference>
<dbReference type="GO" id="GO:0000917">
    <property type="term" value="P:division septum assembly"/>
    <property type="evidence" value="ECO:0007669"/>
    <property type="project" value="UniProtKB-KW"/>
</dbReference>
<dbReference type="GO" id="GO:0043093">
    <property type="term" value="P:FtsZ-dependent cytokinesis"/>
    <property type="evidence" value="ECO:0007669"/>
    <property type="project" value="UniProtKB-UniRule"/>
</dbReference>
<dbReference type="Gene3D" id="1.10.3900.10">
    <property type="entry name" value="YacF-like"/>
    <property type="match status" value="1"/>
</dbReference>
<dbReference type="Gene3D" id="2.60.440.10">
    <property type="entry name" value="YacF-like domains"/>
    <property type="match status" value="1"/>
</dbReference>
<dbReference type="HAMAP" id="MF_01092">
    <property type="entry name" value="ZapD"/>
    <property type="match status" value="1"/>
</dbReference>
<dbReference type="InterPro" id="IPR009777">
    <property type="entry name" value="ZapD"/>
</dbReference>
<dbReference type="InterPro" id="IPR027462">
    <property type="entry name" value="ZapD_C"/>
</dbReference>
<dbReference type="InterPro" id="IPR036268">
    <property type="entry name" value="ZapD_sf"/>
</dbReference>
<dbReference type="NCBIfam" id="NF003656">
    <property type="entry name" value="PRK05287.1-4"/>
    <property type="match status" value="1"/>
</dbReference>
<dbReference type="PANTHER" id="PTHR39455">
    <property type="entry name" value="CELL DIVISION PROTEIN ZAPD"/>
    <property type="match status" value="1"/>
</dbReference>
<dbReference type="PANTHER" id="PTHR39455:SF1">
    <property type="entry name" value="CELL DIVISION PROTEIN ZAPD"/>
    <property type="match status" value="1"/>
</dbReference>
<dbReference type="Pfam" id="PF07072">
    <property type="entry name" value="ZapD"/>
    <property type="match status" value="1"/>
</dbReference>
<dbReference type="SUPFAM" id="SSF160950">
    <property type="entry name" value="YacF-like"/>
    <property type="match status" value="1"/>
</dbReference>
<evidence type="ECO:0000255" key="1">
    <source>
        <dbReference type="HAMAP-Rule" id="MF_01092"/>
    </source>
</evidence>
<feature type="chain" id="PRO_1000064913" description="Cell division protein ZapD">
    <location>
        <begin position="1"/>
        <end position="251"/>
    </location>
</feature>
<organism>
    <name type="scientific">Janthinobacterium sp. (strain Marseille)</name>
    <name type="common">Minibacterium massiliensis</name>
    <dbReference type="NCBI Taxonomy" id="375286"/>
    <lineage>
        <taxon>Bacteria</taxon>
        <taxon>Pseudomonadati</taxon>
        <taxon>Pseudomonadota</taxon>
        <taxon>Betaproteobacteria</taxon>
        <taxon>Burkholderiales</taxon>
        <taxon>Oxalobacteraceae</taxon>
        <taxon>Janthinobacterium</taxon>
    </lineage>
</organism>